<reference key="1">
    <citation type="journal article" date="2006" name="Nat. Biotechnol.">
        <title>The genome and transcriptomes of the anti-tumor agent Clostridium novyi-NT.</title>
        <authorList>
            <person name="Bettegowda C."/>
            <person name="Huang X."/>
            <person name="Lin J."/>
            <person name="Cheong I."/>
            <person name="Kohli M."/>
            <person name="Szabo S.A."/>
            <person name="Zhang X."/>
            <person name="Diaz L.A. Jr."/>
            <person name="Velculescu V.E."/>
            <person name="Parmigiani G."/>
            <person name="Kinzler K.W."/>
            <person name="Vogelstein B."/>
            <person name="Zhou S."/>
        </authorList>
    </citation>
    <scope>NUCLEOTIDE SEQUENCE [LARGE SCALE GENOMIC DNA]</scope>
    <source>
        <strain>NT</strain>
    </source>
</reference>
<name>Y1209_CLONN</name>
<accession>A0PY40</accession>
<dbReference type="EMBL" id="CP000382">
    <property type="protein sequence ID" value="ABK61790.1"/>
    <property type="molecule type" value="Genomic_DNA"/>
</dbReference>
<dbReference type="RefSeq" id="WP_011721300.1">
    <property type="nucleotide sequence ID" value="NC_008593.1"/>
</dbReference>
<dbReference type="KEGG" id="cno:NT01CX_1209"/>
<dbReference type="eggNOG" id="COG2707">
    <property type="taxonomic scope" value="Bacteria"/>
</dbReference>
<dbReference type="HOGENOM" id="CLU_125889_1_0_9"/>
<dbReference type="Proteomes" id="UP000008220">
    <property type="component" value="Chromosome"/>
</dbReference>
<dbReference type="GO" id="GO:0005886">
    <property type="term" value="C:plasma membrane"/>
    <property type="evidence" value="ECO:0007669"/>
    <property type="project" value="UniProtKB-SubCell"/>
</dbReference>
<dbReference type="HAMAP" id="MF_01874">
    <property type="entry name" value="UPF0756"/>
    <property type="match status" value="1"/>
</dbReference>
<dbReference type="InterPro" id="IPR007382">
    <property type="entry name" value="UPF0756_TM"/>
</dbReference>
<dbReference type="PANTHER" id="PTHR38452">
    <property type="entry name" value="UPF0756 MEMBRANE PROTEIN YEAL"/>
    <property type="match status" value="1"/>
</dbReference>
<dbReference type="PANTHER" id="PTHR38452:SF1">
    <property type="entry name" value="UPF0756 MEMBRANE PROTEIN YEAL"/>
    <property type="match status" value="1"/>
</dbReference>
<dbReference type="Pfam" id="PF04284">
    <property type="entry name" value="DUF441"/>
    <property type="match status" value="1"/>
</dbReference>
<gene>
    <name type="ordered locus">NT01CX_1209</name>
</gene>
<keyword id="KW-1003">Cell membrane</keyword>
<keyword id="KW-0472">Membrane</keyword>
<keyword id="KW-1185">Reference proteome</keyword>
<keyword id="KW-0812">Transmembrane</keyword>
<keyword id="KW-1133">Transmembrane helix</keyword>
<comment type="subcellular location">
    <subcellularLocation>
        <location evidence="1">Cell membrane</location>
        <topology evidence="1">Multi-pass membrane protein</topology>
    </subcellularLocation>
</comment>
<comment type="similarity">
    <text evidence="1">Belongs to the UPF0756 family.</text>
</comment>
<protein>
    <recommendedName>
        <fullName evidence="1">UPF0756 membrane protein NT01CX_1209</fullName>
    </recommendedName>
</protein>
<evidence type="ECO:0000255" key="1">
    <source>
        <dbReference type="HAMAP-Rule" id="MF_01874"/>
    </source>
</evidence>
<organism>
    <name type="scientific">Clostridium novyi (strain NT)</name>
    <dbReference type="NCBI Taxonomy" id="386415"/>
    <lineage>
        <taxon>Bacteria</taxon>
        <taxon>Bacillati</taxon>
        <taxon>Bacillota</taxon>
        <taxon>Clostridia</taxon>
        <taxon>Eubacteriales</taxon>
        <taxon>Clostridiaceae</taxon>
        <taxon>Clostridium</taxon>
    </lineage>
</organism>
<sequence length="153" mass="16619">MSSKIILLILMFLSFISKNKSLGIATIVMLFISFFNTEKCITFMENHFMNLGMTFLMIWMLIPIIKNPEFTENIKNAFNLKGIVCFLCGAIVAVLASKGVGFLKGSTDTLTGIILGSIVGVSLLGGVPVGPLIASGIAYEVVFIINLIFKNNC</sequence>
<proteinExistence type="inferred from homology"/>
<feature type="chain" id="PRO_0000388844" description="UPF0756 membrane protein NT01CX_1209">
    <location>
        <begin position="1"/>
        <end position="153"/>
    </location>
</feature>
<feature type="transmembrane region" description="Helical" evidence="1">
    <location>
        <begin position="5"/>
        <end position="25"/>
    </location>
</feature>
<feature type="transmembrane region" description="Helical" evidence="1">
    <location>
        <begin position="45"/>
        <end position="65"/>
    </location>
</feature>
<feature type="transmembrane region" description="Helical" evidence="1">
    <location>
        <begin position="83"/>
        <end position="103"/>
    </location>
</feature>
<feature type="transmembrane region" description="Helical" evidence="1">
    <location>
        <begin position="113"/>
        <end position="133"/>
    </location>
</feature>